<protein>
    <recommendedName>
        <fullName evidence="1">Endoribonuclease YbeY</fullName>
        <ecNumber evidence="1">3.1.-.-</ecNumber>
    </recommendedName>
</protein>
<reference key="1">
    <citation type="journal article" date="2008" name="DNA Res.">
        <title>Comparative genome analysis of Lactobacillus reuteri and Lactobacillus fermentum reveal a genomic island for reuterin and cobalamin production.</title>
        <authorList>
            <person name="Morita H."/>
            <person name="Toh H."/>
            <person name="Fukuda S."/>
            <person name="Horikawa H."/>
            <person name="Oshima K."/>
            <person name="Suzuki T."/>
            <person name="Murakami M."/>
            <person name="Hisamatsu S."/>
            <person name="Kato Y."/>
            <person name="Takizawa T."/>
            <person name="Fukuoka H."/>
            <person name="Yoshimura T."/>
            <person name="Itoh K."/>
            <person name="O'Sullivan D.J."/>
            <person name="McKay L.L."/>
            <person name="Ohno H."/>
            <person name="Kikuchi J."/>
            <person name="Masaoka T."/>
            <person name="Hattori M."/>
        </authorList>
    </citation>
    <scope>NUCLEOTIDE SEQUENCE [LARGE SCALE GENOMIC DNA]</scope>
    <source>
        <strain>JCM 1112</strain>
    </source>
</reference>
<proteinExistence type="inferred from homology"/>
<organism>
    <name type="scientific">Limosilactobacillus reuteri subsp. reuteri (strain JCM 1112)</name>
    <name type="common">Lactobacillus reuteri</name>
    <dbReference type="NCBI Taxonomy" id="557433"/>
    <lineage>
        <taxon>Bacteria</taxon>
        <taxon>Bacillati</taxon>
        <taxon>Bacillota</taxon>
        <taxon>Bacilli</taxon>
        <taxon>Lactobacillales</taxon>
        <taxon>Lactobacillaceae</taxon>
        <taxon>Limosilactobacillus</taxon>
    </lineage>
</organism>
<evidence type="ECO:0000255" key="1">
    <source>
        <dbReference type="HAMAP-Rule" id="MF_00009"/>
    </source>
</evidence>
<comment type="function">
    <text evidence="1">Single strand-specific metallo-endoribonuclease involved in late-stage 70S ribosome quality control and in maturation of the 3' terminus of the 16S rRNA.</text>
</comment>
<comment type="cofactor">
    <cofactor evidence="1">
        <name>Zn(2+)</name>
        <dbReference type="ChEBI" id="CHEBI:29105"/>
    </cofactor>
    <text evidence="1">Binds 1 zinc ion.</text>
</comment>
<comment type="subcellular location">
    <subcellularLocation>
        <location evidence="1">Cytoplasm</location>
    </subcellularLocation>
</comment>
<comment type="similarity">
    <text evidence="1">Belongs to the endoribonuclease YbeY family.</text>
</comment>
<gene>
    <name evidence="1" type="primary">ybeY</name>
    <name type="ordered locus">LAR_0707</name>
</gene>
<dbReference type="EC" id="3.1.-.-" evidence="1"/>
<dbReference type="EMBL" id="AP007281">
    <property type="protein sequence ID" value="BAG25223.1"/>
    <property type="molecule type" value="Genomic_DNA"/>
</dbReference>
<dbReference type="RefSeq" id="WP_003665856.1">
    <property type="nucleotide sequence ID" value="NC_010609.1"/>
</dbReference>
<dbReference type="SMR" id="B2G6Z1"/>
<dbReference type="KEGG" id="lrf:LAR_0707"/>
<dbReference type="HOGENOM" id="CLU_106710_3_0_9"/>
<dbReference type="GO" id="GO:0005737">
    <property type="term" value="C:cytoplasm"/>
    <property type="evidence" value="ECO:0007669"/>
    <property type="project" value="UniProtKB-SubCell"/>
</dbReference>
<dbReference type="GO" id="GO:0004222">
    <property type="term" value="F:metalloendopeptidase activity"/>
    <property type="evidence" value="ECO:0007669"/>
    <property type="project" value="InterPro"/>
</dbReference>
<dbReference type="GO" id="GO:0004521">
    <property type="term" value="F:RNA endonuclease activity"/>
    <property type="evidence" value="ECO:0007669"/>
    <property type="project" value="UniProtKB-UniRule"/>
</dbReference>
<dbReference type="GO" id="GO:0008270">
    <property type="term" value="F:zinc ion binding"/>
    <property type="evidence" value="ECO:0007669"/>
    <property type="project" value="UniProtKB-UniRule"/>
</dbReference>
<dbReference type="GO" id="GO:0006364">
    <property type="term" value="P:rRNA processing"/>
    <property type="evidence" value="ECO:0007669"/>
    <property type="project" value="UniProtKB-UniRule"/>
</dbReference>
<dbReference type="Gene3D" id="3.40.390.30">
    <property type="entry name" value="Metalloproteases ('zincins'), catalytic domain"/>
    <property type="match status" value="1"/>
</dbReference>
<dbReference type="HAMAP" id="MF_00009">
    <property type="entry name" value="Endoribonucl_YbeY"/>
    <property type="match status" value="1"/>
</dbReference>
<dbReference type="InterPro" id="IPR023091">
    <property type="entry name" value="MetalPrtase_cat_dom_sf_prd"/>
</dbReference>
<dbReference type="InterPro" id="IPR002036">
    <property type="entry name" value="YbeY"/>
</dbReference>
<dbReference type="InterPro" id="IPR020549">
    <property type="entry name" value="YbeY_CS"/>
</dbReference>
<dbReference type="NCBIfam" id="TIGR00043">
    <property type="entry name" value="rRNA maturation RNase YbeY"/>
    <property type="match status" value="1"/>
</dbReference>
<dbReference type="PANTHER" id="PTHR46986">
    <property type="entry name" value="ENDORIBONUCLEASE YBEY, CHLOROPLASTIC"/>
    <property type="match status" value="1"/>
</dbReference>
<dbReference type="PANTHER" id="PTHR46986:SF1">
    <property type="entry name" value="ENDORIBONUCLEASE YBEY, CHLOROPLASTIC"/>
    <property type="match status" value="1"/>
</dbReference>
<dbReference type="Pfam" id="PF02130">
    <property type="entry name" value="YbeY"/>
    <property type="match status" value="1"/>
</dbReference>
<dbReference type="SUPFAM" id="SSF55486">
    <property type="entry name" value="Metalloproteases ('zincins'), catalytic domain"/>
    <property type="match status" value="1"/>
</dbReference>
<dbReference type="PROSITE" id="PS01306">
    <property type="entry name" value="UPF0054"/>
    <property type="match status" value="1"/>
</dbReference>
<keyword id="KW-0963">Cytoplasm</keyword>
<keyword id="KW-0255">Endonuclease</keyword>
<keyword id="KW-0378">Hydrolase</keyword>
<keyword id="KW-0479">Metal-binding</keyword>
<keyword id="KW-0540">Nuclease</keyword>
<keyword id="KW-0690">Ribosome biogenesis</keyword>
<keyword id="KW-0698">rRNA processing</keyword>
<keyword id="KW-0862">Zinc</keyword>
<sequence length="159" mass="18003">MDLEIFDQTTAQLPNEQLEMVRDLLQYAAKELSLSENTEMSLTFVNNPEIKKLNAQYRNVDRATDVLSFAAEEAGDETPIIMDPEMAAEIPVNLGDLFISIDKVAEQAKFLGHSVDRELGFLAVHGFLHLNGYDHEEPADEEKMFKLQREILDGYGLTR</sequence>
<name>YBEY_LIMRJ</name>
<accession>B2G6Z1</accession>
<feature type="chain" id="PRO_1000089188" description="Endoribonuclease YbeY">
    <location>
        <begin position="1"/>
        <end position="159"/>
    </location>
</feature>
<feature type="binding site" evidence="1">
    <location>
        <position position="125"/>
    </location>
    <ligand>
        <name>Zn(2+)</name>
        <dbReference type="ChEBI" id="CHEBI:29105"/>
        <note>catalytic</note>
    </ligand>
</feature>
<feature type="binding site" evidence="1">
    <location>
        <position position="129"/>
    </location>
    <ligand>
        <name>Zn(2+)</name>
        <dbReference type="ChEBI" id="CHEBI:29105"/>
        <note>catalytic</note>
    </ligand>
</feature>
<feature type="binding site" evidence="1">
    <location>
        <position position="135"/>
    </location>
    <ligand>
        <name>Zn(2+)</name>
        <dbReference type="ChEBI" id="CHEBI:29105"/>
        <note>catalytic</note>
    </ligand>
</feature>